<gene>
    <name evidence="1" type="primary">ureD</name>
    <name type="ordered locus">Ping_2991</name>
</gene>
<proteinExistence type="inferred from homology"/>
<protein>
    <recommendedName>
        <fullName evidence="1">Urease accessory protein UreD</fullName>
    </recommendedName>
</protein>
<name>URED_PSYIN</name>
<reference key="1">
    <citation type="journal article" date="2008" name="BMC Genomics">
        <title>Genomics of an extreme psychrophile, Psychromonas ingrahamii.</title>
        <authorList>
            <person name="Riley M."/>
            <person name="Staley J.T."/>
            <person name="Danchin A."/>
            <person name="Wang T.Z."/>
            <person name="Brettin T.S."/>
            <person name="Hauser L.J."/>
            <person name="Land M.L."/>
            <person name="Thompson L.S."/>
        </authorList>
    </citation>
    <scope>NUCLEOTIDE SEQUENCE [LARGE SCALE GENOMIC DNA]</scope>
    <source>
        <strain>DSM 17664 / CCUG 51855 / 37</strain>
    </source>
</reference>
<evidence type="ECO:0000255" key="1">
    <source>
        <dbReference type="HAMAP-Rule" id="MF_01384"/>
    </source>
</evidence>
<evidence type="ECO:0000305" key="2"/>
<keyword id="KW-0143">Chaperone</keyword>
<keyword id="KW-0963">Cytoplasm</keyword>
<keyword id="KW-0996">Nickel insertion</keyword>
<keyword id="KW-1185">Reference proteome</keyword>
<dbReference type="EMBL" id="CP000510">
    <property type="protein sequence ID" value="ABM04693.1"/>
    <property type="status" value="ALT_INIT"/>
    <property type="molecule type" value="Genomic_DNA"/>
</dbReference>
<dbReference type="SMR" id="A1SYX8"/>
<dbReference type="STRING" id="357804.Ping_2991"/>
<dbReference type="KEGG" id="pin:Ping_2991"/>
<dbReference type="eggNOG" id="COG0829">
    <property type="taxonomic scope" value="Bacteria"/>
</dbReference>
<dbReference type="HOGENOM" id="CLU_056339_0_0_6"/>
<dbReference type="OrthoDB" id="9798842at2"/>
<dbReference type="Proteomes" id="UP000000639">
    <property type="component" value="Chromosome"/>
</dbReference>
<dbReference type="GO" id="GO:0005737">
    <property type="term" value="C:cytoplasm"/>
    <property type="evidence" value="ECO:0007669"/>
    <property type="project" value="UniProtKB-SubCell"/>
</dbReference>
<dbReference type="GO" id="GO:0016151">
    <property type="term" value="F:nickel cation binding"/>
    <property type="evidence" value="ECO:0007669"/>
    <property type="project" value="UniProtKB-UniRule"/>
</dbReference>
<dbReference type="HAMAP" id="MF_01384">
    <property type="entry name" value="UreD"/>
    <property type="match status" value="1"/>
</dbReference>
<dbReference type="InterPro" id="IPR002669">
    <property type="entry name" value="UreD"/>
</dbReference>
<dbReference type="PANTHER" id="PTHR33643">
    <property type="entry name" value="UREASE ACCESSORY PROTEIN D"/>
    <property type="match status" value="1"/>
</dbReference>
<dbReference type="PANTHER" id="PTHR33643:SF1">
    <property type="entry name" value="UREASE ACCESSORY PROTEIN D"/>
    <property type="match status" value="1"/>
</dbReference>
<dbReference type="Pfam" id="PF01774">
    <property type="entry name" value="UreD"/>
    <property type="match status" value="1"/>
</dbReference>
<comment type="function">
    <text evidence="1">Required for maturation of urease via the functional incorporation of the urease nickel metallocenter.</text>
</comment>
<comment type="subunit">
    <text evidence="1">UreD, UreF and UreG form a complex that acts as a GTP-hydrolysis-dependent molecular chaperone, activating the urease apoprotein by helping to assemble the nickel containing metallocenter of UreC. The UreE protein probably delivers the nickel.</text>
</comment>
<comment type="subcellular location">
    <subcellularLocation>
        <location evidence="1">Cytoplasm</location>
    </subcellularLocation>
</comment>
<comment type="similarity">
    <text evidence="1">Belongs to the UreD family.</text>
</comment>
<comment type="sequence caution" evidence="2">
    <conflict type="erroneous initiation">
        <sequence resource="EMBL-CDS" id="ABM04693"/>
    </conflict>
</comment>
<organism>
    <name type="scientific">Psychromonas ingrahamii (strain DSM 17664 / CCUG 51855 / 37)</name>
    <dbReference type="NCBI Taxonomy" id="357804"/>
    <lineage>
        <taxon>Bacteria</taxon>
        <taxon>Pseudomonadati</taxon>
        <taxon>Pseudomonadota</taxon>
        <taxon>Gammaproteobacteria</taxon>
        <taxon>Alteromonadales</taxon>
        <taxon>Psychromonadaceae</taxon>
        <taxon>Psychromonas</taxon>
    </lineage>
</organism>
<accession>A1SYX8</accession>
<feature type="chain" id="PRO_0000346590" description="Urease accessory protein UreD">
    <location>
        <begin position="1"/>
        <end position="308"/>
    </location>
</feature>
<sequence>MLSTVITKPPITAKPKNQWLAHLMLEFSDTPVGTQLTRTKRKGPLSVQKAFYPEGPDCAHIYLLHPPAGIVSGDELRIGIDVKKNAHLLFTTPGAGRFYRAREDLTIGDSQQTQITQFDLEAQAKCENFPQETIVYEGADGFNSVDINLTSTSVYLGWDITCLGLPNSDQTFIKGKYCQLNRLFCDAKLIYHDRISLSPSNNLLAHPAGLAGNTVFATFLAYAPILHNNPEHSNKPQQHKALVMQIRAKITAESAQEKVSITEINGLLVIRYLGHHAQECKQLFISLWQLLRPLLLNKTAVQPRIWHT</sequence>